<dbReference type="EC" id="4.98.1.1" evidence="2"/>
<dbReference type="EMBL" id="DQ149645">
    <property type="protein sequence ID" value="AAZ78230.1"/>
    <property type="molecule type" value="mRNA"/>
</dbReference>
<dbReference type="RefSeq" id="NP_001033101.1">
    <property type="nucleotide sequence ID" value="NM_001038012.1"/>
</dbReference>
<dbReference type="SMR" id="Q3YA36"/>
<dbReference type="FunCoup" id="Q3YA36">
    <property type="interactions" value="1721"/>
</dbReference>
<dbReference type="STRING" id="9598.ENSPTRP00000063006"/>
<dbReference type="PaxDb" id="9598-ENSPTRP00000054886"/>
<dbReference type="GeneID" id="455437"/>
<dbReference type="KEGG" id="ptr:455437"/>
<dbReference type="CTD" id="2235"/>
<dbReference type="eggNOG" id="KOG1321">
    <property type="taxonomic scope" value="Eukaryota"/>
</dbReference>
<dbReference type="InParanoid" id="Q3YA36"/>
<dbReference type="UniPathway" id="UPA00252">
    <property type="reaction ID" value="UER00325"/>
</dbReference>
<dbReference type="Proteomes" id="UP000002277">
    <property type="component" value="Unplaced"/>
</dbReference>
<dbReference type="GO" id="GO:0005743">
    <property type="term" value="C:mitochondrial inner membrane"/>
    <property type="evidence" value="ECO:0000250"/>
    <property type="project" value="UniProtKB"/>
</dbReference>
<dbReference type="GO" id="GO:0005739">
    <property type="term" value="C:mitochondrion"/>
    <property type="evidence" value="ECO:0000318"/>
    <property type="project" value="GO_Central"/>
</dbReference>
<dbReference type="GO" id="GO:0051537">
    <property type="term" value="F:2 iron, 2 sulfur cluster binding"/>
    <property type="evidence" value="ECO:0007669"/>
    <property type="project" value="UniProtKB-KW"/>
</dbReference>
<dbReference type="GO" id="GO:0004325">
    <property type="term" value="F:ferrochelatase activity"/>
    <property type="evidence" value="ECO:0000250"/>
    <property type="project" value="UniProtKB"/>
</dbReference>
<dbReference type="GO" id="GO:0046872">
    <property type="term" value="F:metal ion binding"/>
    <property type="evidence" value="ECO:0007669"/>
    <property type="project" value="UniProtKB-KW"/>
</dbReference>
<dbReference type="GO" id="GO:0006783">
    <property type="term" value="P:heme biosynthetic process"/>
    <property type="evidence" value="ECO:0000250"/>
    <property type="project" value="UniProtKB"/>
</dbReference>
<dbReference type="CDD" id="cd00419">
    <property type="entry name" value="Ferrochelatase_C"/>
    <property type="match status" value="1"/>
</dbReference>
<dbReference type="CDD" id="cd03411">
    <property type="entry name" value="Ferrochelatase_N"/>
    <property type="match status" value="1"/>
</dbReference>
<dbReference type="FunFam" id="3.40.50.1400:FF:000003">
    <property type="entry name" value="Ferrochelatase"/>
    <property type="match status" value="1"/>
</dbReference>
<dbReference type="Gene3D" id="3.40.50.1400">
    <property type="match status" value="2"/>
</dbReference>
<dbReference type="HAMAP" id="MF_00323">
    <property type="entry name" value="Ferrochelatase"/>
    <property type="match status" value="1"/>
</dbReference>
<dbReference type="InterPro" id="IPR001015">
    <property type="entry name" value="Ferrochelatase"/>
</dbReference>
<dbReference type="InterPro" id="IPR019772">
    <property type="entry name" value="Ferrochelatase_AS"/>
</dbReference>
<dbReference type="InterPro" id="IPR033644">
    <property type="entry name" value="Ferrochelatase_C"/>
</dbReference>
<dbReference type="InterPro" id="IPR033659">
    <property type="entry name" value="Ferrochelatase_N"/>
</dbReference>
<dbReference type="NCBIfam" id="TIGR00109">
    <property type="entry name" value="hemH"/>
    <property type="match status" value="1"/>
</dbReference>
<dbReference type="PANTHER" id="PTHR11108">
    <property type="entry name" value="FERROCHELATASE"/>
    <property type="match status" value="1"/>
</dbReference>
<dbReference type="PANTHER" id="PTHR11108:SF1">
    <property type="entry name" value="FERROCHELATASE, MITOCHONDRIAL"/>
    <property type="match status" value="1"/>
</dbReference>
<dbReference type="Pfam" id="PF00762">
    <property type="entry name" value="Ferrochelatase"/>
    <property type="match status" value="1"/>
</dbReference>
<dbReference type="SUPFAM" id="SSF53800">
    <property type="entry name" value="Chelatase"/>
    <property type="match status" value="1"/>
</dbReference>
<dbReference type="PROSITE" id="PS00534">
    <property type="entry name" value="FERROCHELATASE"/>
    <property type="match status" value="1"/>
</dbReference>
<sequence length="423" mass="47964">MRSLGANMAAALRAAGVLLRDPLVSSSWRVYQPWRWKSVAAAAAATTETAQHAQGAKPQVQPQKRKPKTGILMLNMGGPETLGDVHDFLLRLFLDRDLMTLPIQNKLAPFIAKRRTPKIQEQYRRIGGGSPIKIWTSKQGEGMVKLLDELSPNTAPHKYYIGFRYVHPLTEEAIEEMERDGLERAIAFTQYPQYSCSTTGSSLNAIYRYYNQVGRKPTMKWSTIDRWPTHHLLIQCFADHILKELDHFPLEKRSEVVILFSAHSLPMSVVNRGDPYPQEVSATVQKVMERLEYCNPYRLVWQSKVGPMPWLGPQTDESIKGLCERGRKNILLVPIAFTSDHIETLYELDIEYSQVLAKECGVENIRRAESLNGNPLFSKALADLVHSHIQSNELCSKQLTLSCPLCVNPVCRETKSFFTSQQL</sequence>
<reference key="1">
    <citation type="journal article" date="2006" name="Am. J. Hum. Genet.">
        <title>Contribution of a common single-nucleotide polymorphism to the genetic predisposition for erythropoietic protoporphyria.</title>
        <authorList>
            <person name="Gouya L."/>
            <person name="Martin-Schmitt C."/>
            <person name="Robreau A.-M."/>
            <person name="Austerlitz F."/>
            <person name="Da Silva V."/>
            <person name="Brun P."/>
            <person name="Simonin S."/>
            <person name="Lyoumi S."/>
            <person name="Grandchamp B."/>
            <person name="Beaumont C."/>
            <person name="Puy H."/>
            <person name="Deybach J.-C."/>
        </authorList>
    </citation>
    <scope>NUCLEOTIDE SEQUENCE [MRNA]</scope>
</reference>
<gene>
    <name evidence="2" type="primary">FECH</name>
</gene>
<evidence type="ECO:0000250" key="1">
    <source>
        <dbReference type="UniProtKB" id="P22315"/>
    </source>
</evidence>
<evidence type="ECO:0000250" key="2">
    <source>
        <dbReference type="UniProtKB" id="P22830"/>
    </source>
</evidence>
<evidence type="ECO:0000255" key="3"/>
<evidence type="ECO:0000305" key="4"/>
<name>HEMH_PANTR</name>
<organism>
    <name type="scientific">Pan troglodytes</name>
    <name type="common">Chimpanzee</name>
    <dbReference type="NCBI Taxonomy" id="9598"/>
    <lineage>
        <taxon>Eukaryota</taxon>
        <taxon>Metazoa</taxon>
        <taxon>Chordata</taxon>
        <taxon>Craniata</taxon>
        <taxon>Vertebrata</taxon>
        <taxon>Euteleostomi</taxon>
        <taxon>Mammalia</taxon>
        <taxon>Eutheria</taxon>
        <taxon>Euarchontoglires</taxon>
        <taxon>Primates</taxon>
        <taxon>Haplorrhini</taxon>
        <taxon>Catarrhini</taxon>
        <taxon>Hominidae</taxon>
        <taxon>Pan</taxon>
    </lineage>
</organism>
<feature type="transit peptide" description="Mitochondrion" evidence="3">
    <location>
        <begin position="1"/>
        <end position="54"/>
    </location>
</feature>
<feature type="chain" id="PRO_0000232439" description="Ferrochelatase, mitochondrial">
    <location>
        <begin position="55"/>
        <end position="423"/>
    </location>
</feature>
<feature type="active site" evidence="2">
    <location>
        <position position="230"/>
    </location>
</feature>
<feature type="active site" evidence="2">
    <location>
        <position position="383"/>
    </location>
</feature>
<feature type="binding site" evidence="2">
    <location>
        <position position="115"/>
    </location>
    <ligand>
        <name>protoporphyrin IX</name>
        <dbReference type="ChEBI" id="CHEBI:57306"/>
    </ligand>
</feature>
<feature type="binding site" evidence="2">
    <location>
        <position position="123"/>
    </location>
    <ligand>
        <name>protoporphyrin IX</name>
        <dbReference type="ChEBI" id="CHEBI:57306"/>
    </ligand>
</feature>
<feature type="binding site" evidence="2">
    <location>
        <position position="130"/>
    </location>
    <ligand>
        <name>protoporphyrin IX</name>
        <dbReference type="ChEBI" id="CHEBI:57306"/>
    </ligand>
</feature>
<feature type="binding site" evidence="2">
    <location>
        <position position="196"/>
    </location>
    <ligand>
        <name>[2Fe-2S] cluster</name>
        <dbReference type="ChEBI" id="CHEBI:190135"/>
    </ligand>
</feature>
<feature type="binding site" evidence="2">
    <location>
        <position position="403"/>
    </location>
    <ligand>
        <name>[2Fe-2S] cluster</name>
        <dbReference type="ChEBI" id="CHEBI:190135"/>
    </ligand>
</feature>
<feature type="binding site" evidence="2">
    <location>
        <position position="406"/>
    </location>
    <ligand>
        <name>[2Fe-2S] cluster</name>
        <dbReference type="ChEBI" id="CHEBI:190135"/>
    </ligand>
</feature>
<feature type="binding site" evidence="2">
    <location>
        <position position="411"/>
    </location>
    <ligand>
        <name>[2Fe-2S] cluster</name>
        <dbReference type="ChEBI" id="CHEBI:190135"/>
    </ligand>
</feature>
<feature type="modified residue" description="N6-acetyllysine" evidence="1">
    <location>
        <position position="57"/>
    </location>
</feature>
<feature type="modified residue" description="N6-succinyllysine" evidence="1">
    <location>
        <position position="138"/>
    </location>
</feature>
<feature type="modified residue" description="N6-acetyllysine; alternate" evidence="1">
    <location>
        <position position="415"/>
    </location>
</feature>
<feature type="modified residue" description="N6-succinyllysine; alternate" evidence="1">
    <location>
        <position position="415"/>
    </location>
</feature>
<keyword id="KW-0001">2Fe-2S</keyword>
<keyword id="KW-0007">Acetylation</keyword>
<keyword id="KW-0350">Heme biosynthesis</keyword>
<keyword id="KW-0408">Iron</keyword>
<keyword id="KW-0411">Iron-sulfur</keyword>
<keyword id="KW-0456">Lyase</keyword>
<keyword id="KW-0472">Membrane</keyword>
<keyword id="KW-0479">Metal-binding</keyword>
<keyword id="KW-0496">Mitochondrion</keyword>
<keyword id="KW-0999">Mitochondrion inner membrane</keyword>
<keyword id="KW-0627">Porphyrin biosynthesis</keyword>
<keyword id="KW-1185">Reference proteome</keyword>
<keyword id="KW-0809">Transit peptide</keyword>
<proteinExistence type="evidence at transcript level"/>
<accession>Q3YA36</accession>
<comment type="function">
    <text evidence="2">Catalyzes the ferrous insertion into protoporphyrin IX and participates in the terminal step in the heme biosynthetic pathway.</text>
</comment>
<comment type="catalytic activity">
    <reaction evidence="2">
        <text>heme b + 2 H(+) = protoporphyrin IX + Fe(2+)</text>
        <dbReference type="Rhea" id="RHEA:22584"/>
        <dbReference type="ChEBI" id="CHEBI:15378"/>
        <dbReference type="ChEBI" id="CHEBI:29033"/>
        <dbReference type="ChEBI" id="CHEBI:57306"/>
        <dbReference type="ChEBI" id="CHEBI:60344"/>
        <dbReference type="EC" id="4.98.1.1"/>
    </reaction>
    <physiologicalReaction direction="right-to-left" evidence="2">
        <dbReference type="Rhea" id="RHEA:22586"/>
    </physiologicalReaction>
</comment>
<comment type="cofactor">
    <cofactor evidence="2">
        <name>[2Fe-2S] cluster</name>
        <dbReference type="ChEBI" id="CHEBI:190135"/>
    </cofactor>
    <text evidence="2">Binds 1 [2Fe-2S] cluster.</text>
</comment>
<comment type="pathway">
    <text evidence="2">Porphyrin-containing compound metabolism; protoheme biosynthesis; protoheme from protoporphyrin-IX: step 1/1.</text>
</comment>
<comment type="subunit">
    <text evidence="1 2">Homodimer. Homotetramer (By similarity). Interaction with PGRMC1; the interaction results in decreased FECH activity (By similarity). Interacts with ABCB10 and SLC25A37; this interaction forms an oligomeric complex (By similarity). Forms a complex with ABCB7 and ABCB10, where a dimeric FECH bridges ABCB7 and ABCB10 homodimers; this complex may be required for cellular iron homeostasis, mitochondrial function and heme biosynthesis. Interacts with ABCB7 and ABCB10 (By similarity).</text>
</comment>
<comment type="subcellular location">
    <subcellularLocation>
        <location evidence="1">Mitochondrion inner membrane</location>
        <topology evidence="1">Peripheral membrane protein</topology>
        <orientation evidence="1">Matrix side</orientation>
    </subcellularLocation>
</comment>
<comment type="similarity">
    <text evidence="4">Belongs to the ferrochelatase family.</text>
</comment>
<protein>
    <recommendedName>
        <fullName evidence="2">Ferrochelatase, mitochondrial</fullName>
        <ecNumber evidence="2">4.98.1.1</ecNumber>
    </recommendedName>
    <alternativeName>
        <fullName>Heme synthase</fullName>
    </alternativeName>
    <alternativeName>
        <fullName>Protoheme ferro-lyase</fullName>
    </alternativeName>
</protein>